<protein>
    <recommendedName>
        <fullName>Legumin A</fullName>
    </recommendedName>
    <component>
        <recommendedName>
            <fullName>Legumin A alpha chain</fullName>
        </recommendedName>
        <alternativeName>
            <fullName>Legumin A acidic chain</fullName>
        </alternativeName>
    </component>
    <component>
        <recommendedName>
            <fullName>Legumin A beta chain</fullName>
        </recommendedName>
        <alternativeName>
            <fullName>Legumin A basic chain</fullName>
        </alternativeName>
    </component>
</protein>
<feature type="signal peptide" evidence="2">
    <location>
        <begin position="1"/>
        <end position="21"/>
    </location>
</feature>
<feature type="chain" id="PRO_0000032066" description="Legumin A alpha chain">
    <location>
        <begin position="22"/>
        <end position="332"/>
    </location>
</feature>
<feature type="chain" id="PRO_0000032067" description="Legumin A beta chain">
    <location>
        <begin position="333"/>
        <end position="517"/>
    </location>
</feature>
<feature type="domain" description="Cupin type-1 1" evidence="2">
    <location>
        <begin position="36"/>
        <end position="232"/>
    </location>
</feature>
<feature type="domain" description="Cupin type-1 2" evidence="2">
    <location>
        <begin position="345"/>
        <end position="494"/>
    </location>
</feature>
<feature type="region of interest" description="Disordered" evidence="3">
    <location>
        <begin position="249"/>
        <end position="335"/>
    </location>
</feature>
<feature type="disulfide bond" evidence="1">
    <location>
        <begin position="31"/>
        <end position="64"/>
    </location>
</feature>
<feature type="disulfide bond" description="Interchain (between alpha and beta chains)" evidence="2">
    <location>
        <begin position="107"/>
        <end position="339"/>
    </location>
</feature>
<feature type="sequence conflict" description="In Ref. 2; AAA33677." evidence="4" ref="2">
    <original>Y</original>
    <variation>F</variation>
    <location>
        <position position="219"/>
    </location>
</feature>
<feature type="sequence conflict" description="In Ref. 2; AAA33677." evidence="4" ref="2">
    <original>G</original>
    <variation>R</variation>
    <location>
        <position position="319"/>
    </location>
</feature>
<feature type="strand" evidence="5">
    <location>
        <begin position="42"/>
        <end position="47"/>
    </location>
</feature>
<feature type="strand" evidence="5">
    <location>
        <begin position="50"/>
        <end position="54"/>
    </location>
</feature>
<feature type="helix" evidence="5">
    <location>
        <begin position="60"/>
        <end position="65"/>
    </location>
</feature>
<feature type="strand" evidence="5">
    <location>
        <begin position="68"/>
        <end position="74"/>
    </location>
</feature>
<feature type="strand" evidence="5">
    <location>
        <begin position="78"/>
        <end position="87"/>
    </location>
</feature>
<feature type="strand" evidence="5">
    <location>
        <begin position="89"/>
        <end position="95"/>
    </location>
</feature>
<feature type="strand" evidence="5">
    <location>
        <begin position="98"/>
        <end position="103"/>
    </location>
</feature>
<feature type="strand" evidence="5">
    <location>
        <begin position="132"/>
        <end position="135"/>
    </location>
</feature>
<feature type="strand" evidence="5">
    <location>
        <begin position="139"/>
        <end position="143"/>
    </location>
</feature>
<feature type="strand" evidence="5">
    <location>
        <begin position="148"/>
        <end position="153"/>
    </location>
</feature>
<feature type="strand" evidence="5">
    <location>
        <begin position="155"/>
        <end position="157"/>
    </location>
</feature>
<feature type="strand" evidence="5">
    <location>
        <begin position="159"/>
        <end position="165"/>
    </location>
</feature>
<feature type="strand" evidence="5">
    <location>
        <begin position="180"/>
        <end position="186"/>
    </location>
</feature>
<feature type="helix" evidence="5">
    <location>
        <begin position="192"/>
        <end position="194"/>
    </location>
</feature>
<feature type="helix" evidence="5">
    <location>
        <begin position="211"/>
        <end position="214"/>
    </location>
</feature>
<feature type="helix" evidence="5">
    <location>
        <begin position="217"/>
        <end position="224"/>
    </location>
</feature>
<feature type="helix" evidence="5">
    <location>
        <begin position="228"/>
        <end position="234"/>
    </location>
</feature>
<feature type="turn" evidence="5">
    <location>
        <begin position="235"/>
        <end position="238"/>
    </location>
</feature>
<feature type="turn" evidence="5">
    <location>
        <begin position="241"/>
        <end position="243"/>
    </location>
</feature>
<feature type="strand" evidence="5">
    <location>
        <begin position="245"/>
        <end position="248"/>
    </location>
</feature>
<feature type="strand" evidence="5">
    <location>
        <begin position="339"/>
        <end position="341"/>
    </location>
</feature>
<feature type="strand" evidence="5">
    <location>
        <begin position="344"/>
        <end position="346"/>
    </location>
</feature>
<feature type="strand" evidence="5">
    <location>
        <begin position="354"/>
        <end position="357"/>
    </location>
</feature>
<feature type="turn" evidence="5">
    <location>
        <begin position="358"/>
        <end position="360"/>
    </location>
</feature>
<feature type="strand" evidence="5">
    <location>
        <begin position="361"/>
        <end position="366"/>
    </location>
</feature>
<feature type="turn" evidence="5">
    <location>
        <begin position="368"/>
        <end position="370"/>
    </location>
</feature>
<feature type="helix" evidence="5">
    <location>
        <begin position="374"/>
        <end position="377"/>
    </location>
</feature>
<feature type="strand" evidence="5">
    <location>
        <begin position="380"/>
        <end position="387"/>
    </location>
</feature>
<feature type="strand" evidence="5">
    <location>
        <begin position="391"/>
        <end position="399"/>
    </location>
</feature>
<feature type="strand" evidence="5">
    <location>
        <begin position="402"/>
        <end position="416"/>
    </location>
</feature>
<feature type="strand" evidence="5">
    <location>
        <begin position="422"/>
        <end position="429"/>
    </location>
</feature>
<feature type="strand" evidence="5">
    <location>
        <begin position="433"/>
        <end position="436"/>
    </location>
</feature>
<feature type="strand" evidence="5">
    <location>
        <begin position="441"/>
        <end position="446"/>
    </location>
</feature>
<feature type="strand" evidence="5">
    <location>
        <begin position="448"/>
        <end position="459"/>
    </location>
</feature>
<feature type="strand" evidence="5">
    <location>
        <begin position="464"/>
        <end position="469"/>
    </location>
</feature>
<feature type="turn" evidence="5">
    <location>
        <begin position="473"/>
        <end position="476"/>
    </location>
</feature>
<feature type="helix" evidence="5">
    <location>
        <begin position="479"/>
        <end position="486"/>
    </location>
</feature>
<feature type="helix" evidence="5">
    <location>
        <begin position="490"/>
        <end position="498"/>
    </location>
</feature>
<feature type="strand" evidence="5">
    <location>
        <begin position="503"/>
        <end position="506"/>
    </location>
</feature>
<gene>
    <name type="primary">LEGA</name>
</gene>
<evidence type="ECO:0000250" key="1"/>
<evidence type="ECO:0000255" key="2"/>
<evidence type="ECO:0000256" key="3">
    <source>
        <dbReference type="SAM" id="MobiDB-lite"/>
    </source>
</evidence>
<evidence type="ECO:0000305" key="4"/>
<evidence type="ECO:0007829" key="5">
    <source>
        <dbReference type="PDB" id="3KSC"/>
    </source>
</evidence>
<comment type="function">
    <text>This protein found in the seeds of many leguminous and non-leguminous plants is the source of sulfur-containing amino acids in seed meals.</text>
</comment>
<comment type="subunit">
    <text>Hexamer; each subunit is composed of an acidic and a basic chain derived from a single precursor and linked by a disulfide bond.</text>
</comment>
<comment type="similarity">
    <text evidence="4">Belongs to the 11S seed storage protein (globulins) family.</text>
</comment>
<comment type="sequence caution" evidence="4">
    <conflict type="erroneous gene model prediction">
        <sequence resource="EMBL-CDS" id="CAA26720"/>
    </conflict>
</comment>
<keyword id="KW-0002">3D-structure</keyword>
<keyword id="KW-1015">Disulfide bond</keyword>
<keyword id="KW-0708">Seed storage protein</keyword>
<keyword id="KW-0732">Signal</keyword>
<keyword id="KW-0758">Storage protein</keyword>
<name>LEGA_PEA</name>
<sequence>MAKLLALSLSFCFLLLGGCFALREQPQQNECQLERLDALEPDNRIESEGGLIETWNPNNKQFRCAGVALSRATLQRNALRRPYYSNAPQEIFIQQGNGYFGMVFPGCPETFEEPQESEQGEGRRYRDRHQKVNRFREGDIIAVPTGIVFWMYNDQDTPVIAVSLTDIRSSNNQLDQMPRRFYLAGNHEQEFLQYQHQQGGKQEQENEGNNIFSGFKRDYLEDAFNVNRHIVDRLQGRNEDEEKGAIVKVKGGLSIISPPEKQARHQRGSRQEEDEDEEKQPRHQRGSRQEEEEDEDEERQPRHQRRRGEEEEEDKKERGGSQKGKSRRQGDNGLEETVCTAKLRLNIGPSSSPDIYNPEAGRIKTVTSLDLPVLRWLKLSAEHGSLHKNAMFVPHYNLNANSIIYALKGRARLQVVNCNGNTVFDGELEAGRALTVPQNYAVAAKSLSDRFSYVAFKTNDRAGIARLAGTSSVINNLPLDVVAATFNLQRNEARQLKSNNPFKFLVPARESENRASA</sequence>
<organism>
    <name type="scientific">Pisum sativum</name>
    <name type="common">Garden pea</name>
    <name type="synonym">Lathyrus oleraceus</name>
    <dbReference type="NCBI Taxonomy" id="3888"/>
    <lineage>
        <taxon>Eukaryota</taxon>
        <taxon>Viridiplantae</taxon>
        <taxon>Streptophyta</taxon>
        <taxon>Embryophyta</taxon>
        <taxon>Tracheophyta</taxon>
        <taxon>Spermatophyta</taxon>
        <taxon>Magnoliopsida</taxon>
        <taxon>eudicotyledons</taxon>
        <taxon>Gunneridae</taxon>
        <taxon>Pentapetalae</taxon>
        <taxon>rosids</taxon>
        <taxon>fabids</taxon>
        <taxon>Fabales</taxon>
        <taxon>Fabaceae</taxon>
        <taxon>Papilionoideae</taxon>
        <taxon>50 kb inversion clade</taxon>
        <taxon>NPAAA clade</taxon>
        <taxon>Hologalegina</taxon>
        <taxon>IRL clade</taxon>
        <taxon>Fabeae</taxon>
        <taxon>Pisum</taxon>
    </lineage>
</organism>
<accession>P02857</accession>
<accession>Q41033</accession>
<accession>Q41034</accession>
<reference key="1">
    <citation type="journal article" date="1984" name="Nucleic Acids Res.">
        <title>The complete nucleotide sequence of a legumin gene from pea (Pisum sativum L.).</title>
        <authorList>
            <person name="Lycett G.W."/>
            <person name="Croy R.R.D."/>
            <person name="Shirsat A.H."/>
            <person name="Boulter D."/>
        </authorList>
    </citation>
    <scope>NUCLEOTIDE SEQUENCE</scope>
    <source>
        <strain>cv. Feltham First</strain>
    </source>
</reference>
<reference key="2">
    <citation type="journal article" date="1986" name="Plant Mol. Biol.">
        <title>The complete deduced amino acid sequences of legumin beta-polypeptides from different genetic loci in Pisum.</title>
        <authorList>
            <person name="Domoney C."/>
            <person name="Barker D."/>
            <person name="Casey R."/>
        </authorList>
        <dbReference type="AGRICOLA" id="IND87019921"/>
    </citation>
    <scope>NUCLEOTIDE SEQUENCE OF 209-411</scope>
</reference>
<dbReference type="EMBL" id="X02982">
    <property type="protein sequence ID" value="CAA26720.1"/>
    <property type="status" value="ALT_SEQ"/>
    <property type="molecule type" value="Genomic_DNA"/>
</dbReference>
<dbReference type="EMBL" id="M16904">
    <property type="protein sequence ID" value="AAA33677.1"/>
    <property type="molecule type" value="mRNA"/>
</dbReference>
<dbReference type="PIR" id="A22866">
    <property type="entry name" value="FWPMLA"/>
</dbReference>
<dbReference type="PIR" id="S09559">
    <property type="entry name" value="S09559"/>
</dbReference>
<dbReference type="PIR" id="T06452">
    <property type="entry name" value="T06452"/>
</dbReference>
<dbReference type="PDB" id="3KSC">
    <property type="method" value="X-ray"/>
    <property type="resolution" value="2.61 A"/>
    <property type="chains" value="A/B/C/D/E/F=22-517"/>
</dbReference>
<dbReference type="PDBsum" id="3KSC"/>
<dbReference type="SMR" id="P02857"/>
<dbReference type="EvolutionaryTrace" id="P02857"/>
<dbReference type="GO" id="GO:0045735">
    <property type="term" value="F:nutrient reservoir activity"/>
    <property type="evidence" value="ECO:0007669"/>
    <property type="project" value="UniProtKB-KW"/>
</dbReference>
<dbReference type="CDD" id="cd02243">
    <property type="entry name" value="cupin_11S_legumin_C"/>
    <property type="match status" value="1"/>
</dbReference>
<dbReference type="CDD" id="cd02242">
    <property type="entry name" value="cupin_11S_legumin_N"/>
    <property type="match status" value="1"/>
</dbReference>
<dbReference type="FunFam" id="2.60.120.10:FF:000073">
    <property type="entry name" value="Glycinin G1"/>
    <property type="match status" value="1"/>
</dbReference>
<dbReference type="Gene3D" id="2.60.120.10">
    <property type="entry name" value="Jelly Rolls"/>
    <property type="match status" value="2"/>
</dbReference>
<dbReference type="InterPro" id="IPR022379">
    <property type="entry name" value="11S_seedstore_CS"/>
</dbReference>
<dbReference type="InterPro" id="IPR006044">
    <property type="entry name" value="11S_seedstore_pln"/>
</dbReference>
<dbReference type="InterPro" id="IPR006045">
    <property type="entry name" value="Cupin_1"/>
</dbReference>
<dbReference type="InterPro" id="IPR014710">
    <property type="entry name" value="RmlC-like_jellyroll"/>
</dbReference>
<dbReference type="InterPro" id="IPR011051">
    <property type="entry name" value="RmlC_Cupin_sf"/>
</dbReference>
<dbReference type="InterPro" id="IPR050253">
    <property type="entry name" value="Seed_Storage-Functional"/>
</dbReference>
<dbReference type="PANTHER" id="PTHR31189:SF77">
    <property type="entry name" value="GLYCININ G3"/>
    <property type="match status" value="1"/>
</dbReference>
<dbReference type="PANTHER" id="PTHR31189">
    <property type="entry name" value="OS03G0336100 PROTEIN-RELATED"/>
    <property type="match status" value="1"/>
</dbReference>
<dbReference type="Pfam" id="PF00190">
    <property type="entry name" value="Cupin_1"/>
    <property type="match status" value="2"/>
</dbReference>
<dbReference type="PRINTS" id="PR00439">
    <property type="entry name" value="11SGLOBULIN"/>
</dbReference>
<dbReference type="SMART" id="SM00835">
    <property type="entry name" value="Cupin_1"/>
    <property type="match status" value="2"/>
</dbReference>
<dbReference type="SUPFAM" id="SSF51182">
    <property type="entry name" value="RmlC-like cupins"/>
    <property type="match status" value="1"/>
</dbReference>
<dbReference type="PROSITE" id="PS00305">
    <property type="entry name" value="11S_SEED_STORAGE"/>
    <property type="match status" value="1"/>
</dbReference>
<proteinExistence type="evidence at protein level"/>